<proteinExistence type="evidence at protein level"/>
<evidence type="ECO:0000256" key="1">
    <source>
        <dbReference type="SAM" id="MobiDB-lite"/>
    </source>
</evidence>
<evidence type="ECO:0000269" key="2">
    <source>
    </source>
</evidence>
<evidence type="ECO:0000269" key="3">
    <source>
    </source>
</evidence>
<feature type="chain" id="PRO_0000303893" description="Nucleolar protein dnt1">
    <location>
        <begin position="1"/>
        <end position="599"/>
    </location>
</feature>
<feature type="region of interest" description="Disordered" evidence="1">
    <location>
        <begin position="210"/>
        <end position="262"/>
    </location>
</feature>
<feature type="region of interest" description="Disordered" evidence="1">
    <location>
        <begin position="292"/>
        <end position="599"/>
    </location>
</feature>
<feature type="compositionally biased region" description="Polar residues" evidence="1">
    <location>
        <begin position="218"/>
        <end position="241"/>
    </location>
</feature>
<feature type="compositionally biased region" description="Low complexity" evidence="1">
    <location>
        <begin position="242"/>
        <end position="251"/>
    </location>
</feature>
<feature type="compositionally biased region" description="Basic and acidic residues" evidence="1">
    <location>
        <begin position="292"/>
        <end position="303"/>
    </location>
</feature>
<feature type="compositionally biased region" description="Acidic residues" evidence="1">
    <location>
        <begin position="307"/>
        <end position="320"/>
    </location>
</feature>
<feature type="compositionally biased region" description="Basic and acidic residues" evidence="1">
    <location>
        <begin position="321"/>
        <end position="333"/>
    </location>
</feature>
<feature type="compositionally biased region" description="Polar residues" evidence="1">
    <location>
        <begin position="344"/>
        <end position="354"/>
    </location>
</feature>
<feature type="compositionally biased region" description="Low complexity" evidence="1">
    <location>
        <begin position="364"/>
        <end position="380"/>
    </location>
</feature>
<feature type="compositionally biased region" description="Polar residues" evidence="1">
    <location>
        <begin position="390"/>
        <end position="401"/>
    </location>
</feature>
<feature type="compositionally biased region" description="Basic and acidic residues" evidence="1">
    <location>
        <begin position="402"/>
        <end position="413"/>
    </location>
</feature>
<feature type="compositionally biased region" description="Polar residues" evidence="1">
    <location>
        <begin position="421"/>
        <end position="431"/>
    </location>
</feature>
<feature type="compositionally biased region" description="Acidic residues" evidence="1">
    <location>
        <begin position="436"/>
        <end position="452"/>
    </location>
</feature>
<feature type="compositionally biased region" description="Polar residues" evidence="1">
    <location>
        <begin position="456"/>
        <end position="480"/>
    </location>
</feature>
<feature type="compositionally biased region" description="Basic and acidic residues" evidence="1">
    <location>
        <begin position="483"/>
        <end position="500"/>
    </location>
</feature>
<feature type="compositionally biased region" description="Polar residues" evidence="1">
    <location>
        <begin position="501"/>
        <end position="514"/>
    </location>
</feature>
<feature type="compositionally biased region" description="Basic and acidic residues" evidence="1">
    <location>
        <begin position="533"/>
        <end position="542"/>
    </location>
</feature>
<feature type="compositionally biased region" description="Basic and acidic residues" evidence="1">
    <location>
        <begin position="558"/>
        <end position="574"/>
    </location>
</feature>
<feature type="modified residue" description="Phosphoserine" evidence="3">
    <location>
        <position position="174"/>
    </location>
</feature>
<feature type="modified residue" description="Phosphoserine" evidence="3">
    <location>
        <position position="306"/>
    </location>
</feature>
<feature type="modified residue" description="Phosphothreonine" evidence="3">
    <location>
        <position position="513"/>
    </location>
</feature>
<name>DNT1_SCHPO</name>
<sequence length="599" mass="65977">MRTTLRLHIIKDGEQDNQFMILFDPSSSISLLKEKVQETYKSLYPFESNINIRNIKNEESYDIPNEYLVGEIFPTNSKVIVESFSSPLKKLDGTMINFKEKNIQHDLDGVENDFATVQSASNGVHAINGKRTHPDESENPRKLPKKNFVEAIDANSPGFVYRPTSIRDRAYSISSNHDNESTLTEGIALKEIESPDKDRKADGIVNLSVTQEEDDNHQSFNSSLTPSQPTTYNRANFFSINDASSDSSSDAPLRTLSSPSRLRMKDNDRKYLVEHSPAALIKESETIDGIDDKSLRSSTREVSVESPNEDSVNDDSSSDVSDEKETEAKHEIRAPAIIVRETSSHPSTAVPSENDTTESENDTLSESSTTSISSSPSENSDTSDDLTKVDSPNKSLVNDNVSAKHDKESENGKSKFPPPSQTLVTTSTISAAGNEPSDEIGSENDSDSDSDSDSSVPLSQLQKKSQQRNSVSHEIQNRGTKGSPKEPKAKPSTERPETHRTLSYSRLSELSKTFSPEIREPSLTKKTAVSMQESKEEGRSDESSESEESGSSSDESDNSEKEDRSNPIPVEKRASTVLNTKKKRKAKRNSALAGLAALV</sequence>
<organism>
    <name type="scientific">Schizosaccharomyces pombe (strain 972 / ATCC 24843)</name>
    <name type="common">Fission yeast</name>
    <dbReference type="NCBI Taxonomy" id="284812"/>
    <lineage>
        <taxon>Eukaryota</taxon>
        <taxon>Fungi</taxon>
        <taxon>Dikarya</taxon>
        <taxon>Ascomycota</taxon>
        <taxon>Taphrinomycotina</taxon>
        <taxon>Schizosaccharomycetes</taxon>
        <taxon>Schizosaccharomycetales</taxon>
        <taxon>Schizosaccharomycetaceae</taxon>
        <taxon>Schizosaccharomyces</taxon>
    </lineage>
</organism>
<dbReference type="EMBL" id="CU329671">
    <property type="protein sequence ID" value="CAA20098.1"/>
    <property type="molecule type" value="Genomic_DNA"/>
</dbReference>
<dbReference type="PIR" id="T39990">
    <property type="entry name" value="T39990"/>
</dbReference>
<dbReference type="RefSeq" id="NP_596544.1">
    <property type="nucleotide sequence ID" value="NM_001022465.2"/>
</dbReference>
<dbReference type="BioGRID" id="277027">
    <property type="interactions" value="13"/>
</dbReference>
<dbReference type="FunCoup" id="O74354">
    <property type="interactions" value="89"/>
</dbReference>
<dbReference type="IntAct" id="O74354">
    <property type="interactions" value="1"/>
</dbReference>
<dbReference type="STRING" id="284812.O74354"/>
<dbReference type="iPTMnet" id="O74354"/>
<dbReference type="PaxDb" id="4896-SPBC25D12.02c.1"/>
<dbReference type="EnsemblFungi" id="SPBC25D12.02c.1">
    <property type="protein sequence ID" value="SPBC25D12.02c.1:pep"/>
    <property type="gene ID" value="SPBC25D12.02c"/>
</dbReference>
<dbReference type="GeneID" id="2540499"/>
<dbReference type="KEGG" id="spo:2540499"/>
<dbReference type="PomBase" id="SPBC25D12.02c">
    <property type="gene designation" value="dnt1"/>
</dbReference>
<dbReference type="VEuPathDB" id="FungiDB:SPBC25D12.02c"/>
<dbReference type="HOGENOM" id="CLU_464730_0_0_1"/>
<dbReference type="InParanoid" id="O74354"/>
<dbReference type="OMA" id="DIPNEYC"/>
<dbReference type="PRO" id="PR:O74354"/>
<dbReference type="Proteomes" id="UP000002485">
    <property type="component" value="Chromosome II"/>
</dbReference>
<dbReference type="GO" id="GO:0005737">
    <property type="term" value="C:cytoplasm"/>
    <property type="evidence" value="ECO:0007005"/>
    <property type="project" value="PomBase"/>
</dbReference>
<dbReference type="GO" id="GO:0072686">
    <property type="term" value="C:mitotic spindle"/>
    <property type="evidence" value="ECO:0000314"/>
    <property type="project" value="PomBase"/>
</dbReference>
<dbReference type="GO" id="GO:0005730">
    <property type="term" value="C:nucleolus"/>
    <property type="evidence" value="ECO:0000314"/>
    <property type="project" value="PomBase"/>
</dbReference>
<dbReference type="GO" id="GO:1902426">
    <property type="term" value="P:deactivation of mitotic spindle assembly checkpoint"/>
    <property type="evidence" value="ECO:0000315"/>
    <property type="project" value="PomBase"/>
</dbReference>
<dbReference type="GO" id="GO:0000917">
    <property type="term" value="P:division septum assembly"/>
    <property type="evidence" value="ECO:0007669"/>
    <property type="project" value="UniProtKB-KW"/>
</dbReference>
<dbReference type="GO" id="GO:1902543">
    <property type="term" value="P:negative regulation of protein localization to mitotic spindle pole body"/>
    <property type="evidence" value="ECO:0000315"/>
    <property type="project" value="PomBase"/>
</dbReference>
<dbReference type="GO" id="GO:0031030">
    <property type="term" value="P:negative regulation of septation initiation signaling"/>
    <property type="evidence" value="ECO:0000315"/>
    <property type="project" value="PomBase"/>
</dbReference>
<dbReference type="GO" id="GO:0010971">
    <property type="term" value="P:positive regulation of G2/M transition of mitotic cell cycle"/>
    <property type="evidence" value="ECO:0000315"/>
    <property type="project" value="PomBase"/>
</dbReference>
<dbReference type="InterPro" id="IPR018844">
    <property type="entry name" value="Dnt1-like_N"/>
</dbReference>
<dbReference type="Pfam" id="PF10407">
    <property type="entry name" value="Cytokin_check_N"/>
    <property type="match status" value="1"/>
</dbReference>
<accession>O74354</accession>
<keyword id="KW-0131">Cell cycle</keyword>
<keyword id="KW-0132">Cell division</keyword>
<keyword id="KW-0963">Cytoplasm</keyword>
<keyword id="KW-0206">Cytoskeleton</keyword>
<keyword id="KW-0498">Mitosis</keyword>
<keyword id="KW-0539">Nucleus</keyword>
<keyword id="KW-0597">Phosphoprotein</keyword>
<keyword id="KW-1185">Reference proteome</keyword>
<keyword id="KW-0717">Septation</keyword>
<reference key="1">
    <citation type="journal article" date="2002" name="Nature">
        <title>The genome sequence of Schizosaccharomyces pombe.</title>
        <authorList>
            <person name="Wood V."/>
            <person name="Gwilliam R."/>
            <person name="Rajandream M.A."/>
            <person name="Lyne M.H."/>
            <person name="Lyne R."/>
            <person name="Stewart A."/>
            <person name="Sgouros J.G."/>
            <person name="Peat N."/>
            <person name="Hayles J."/>
            <person name="Baker S.G."/>
            <person name="Basham D."/>
            <person name="Bowman S."/>
            <person name="Brooks K."/>
            <person name="Brown D."/>
            <person name="Brown S."/>
            <person name="Chillingworth T."/>
            <person name="Churcher C.M."/>
            <person name="Collins M."/>
            <person name="Connor R."/>
            <person name="Cronin A."/>
            <person name="Davis P."/>
            <person name="Feltwell T."/>
            <person name="Fraser A."/>
            <person name="Gentles S."/>
            <person name="Goble A."/>
            <person name="Hamlin N."/>
            <person name="Harris D.E."/>
            <person name="Hidalgo J."/>
            <person name="Hodgson G."/>
            <person name="Holroyd S."/>
            <person name="Hornsby T."/>
            <person name="Howarth S."/>
            <person name="Huckle E.J."/>
            <person name="Hunt S."/>
            <person name="Jagels K."/>
            <person name="James K.D."/>
            <person name="Jones L."/>
            <person name="Jones M."/>
            <person name="Leather S."/>
            <person name="McDonald S."/>
            <person name="McLean J."/>
            <person name="Mooney P."/>
            <person name="Moule S."/>
            <person name="Mungall K.L."/>
            <person name="Murphy L.D."/>
            <person name="Niblett D."/>
            <person name="Odell C."/>
            <person name="Oliver K."/>
            <person name="O'Neil S."/>
            <person name="Pearson D."/>
            <person name="Quail M.A."/>
            <person name="Rabbinowitsch E."/>
            <person name="Rutherford K.M."/>
            <person name="Rutter S."/>
            <person name="Saunders D."/>
            <person name="Seeger K."/>
            <person name="Sharp S."/>
            <person name="Skelton J."/>
            <person name="Simmonds M.N."/>
            <person name="Squares R."/>
            <person name="Squares S."/>
            <person name="Stevens K."/>
            <person name="Taylor K."/>
            <person name="Taylor R.G."/>
            <person name="Tivey A."/>
            <person name="Walsh S.V."/>
            <person name="Warren T."/>
            <person name="Whitehead S."/>
            <person name="Woodward J.R."/>
            <person name="Volckaert G."/>
            <person name="Aert R."/>
            <person name="Robben J."/>
            <person name="Grymonprez B."/>
            <person name="Weltjens I."/>
            <person name="Vanstreels E."/>
            <person name="Rieger M."/>
            <person name="Schaefer M."/>
            <person name="Mueller-Auer S."/>
            <person name="Gabel C."/>
            <person name="Fuchs M."/>
            <person name="Duesterhoeft A."/>
            <person name="Fritzc C."/>
            <person name="Holzer E."/>
            <person name="Moestl D."/>
            <person name="Hilbert H."/>
            <person name="Borzym K."/>
            <person name="Langer I."/>
            <person name="Beck A."/>
            <person name="Lehrach H."/>
            <person name="Reinhardt R."/>
            <person name="Pohl T.M."/>
            <person name="Eger P."/>
            <person name="Zimmermann W."/>
            <person name="Wedler H."/>
            <person name="Wambutt R."/>
            <person name="Purnelle B."/>
            <person name="Goffeau A."/>
            <person name="Cadieu E."/>
            <person name="Dreano S."/>
            <person name="Gloux S."/>
            <person name="Lelaure V."/>
            <person name="Mottier S."/>
            <person name="Galibert F."/>
            <person name="Aves S.J."/>
            <person name="Xiang Z."/>
            <person name="Hunt C."/>
            <person name="Moore K."/>
            <person name="Hurst S.M."/>
            <person name="Lucas M."/>
            <person name="Rochet M."/>
            <person name="Gaillardin C."/>
            <person name="Tallada V.A."/>
            <person name="Garzon A."/>
            <person name="Thode G."/>
            <person name="Daga R.R."/>
            <person name="Cruzado L."/>
            <person name="Jimenez J."/>
            <person name="Sanchez M."/>
            <person name="del Rey F."/>
            <person name="Benito J."/>
            <person name="Dominguez A."/>
            <person name="Revuelta J.L."/>
            <person name="Moreno S."/>
            <person name="Armstrong J."/>
            <person name="Forsburg S.L."/>
            <person name="Cerutti L."/>
            <person name="Lowe T."/>
            <person name="McCombie W.R."/>
            <person name="Paulsen I."/>
            <person name="Potashkin J."/>
            <person name="Shpakovski G.V."/>
            <person name="Ussery D."/>
            <person name="Barrell B.G."/>
            <person name="Nurse P."/>
        </authorList>
    </citation>
    <scope>NUCLEOTIDE SEQUENCE [LARGE SCALE GENOMIC DNA]</scope>
    <source>
        <strain>972 / ATCC 24843</strain>
    </source>
</reference>
<reference key="2">
    <citation type="journal article" date="2007" name="Mol. Biol. Cell">
        <title>The nucleolar net1/cfi1-related protein dnt1 antagonizes the septation initiation network in fission yeast.</title>
        <authorList>
            <person name="Jin Q.W."/>
            <person name="Ray S."/>
            <person name="Choi S.H."/>
            <person name="McCollum D."/>
        </authorList>
    </citation>
    <scope>FUNCTION</scope>
    <scope>SUBCELLULAR LOCATION</scope>
    <scope>PHOSPHORYLATION</scope>
</reference>
<reference key="3">
    <citation type="journal article" date="2006" name="Nat. Biotechnol.">
        <title>ORFeome cloning and global analysis of protein localization in the fission yeast Schizosaccharomyces pombe.</title>
        <authorList>
            <person name="Matsuyama A."/>
            <person name="Arai R."/>
            <person name="Yashiroda Y."/>
            <person name="Shirai A."/>
            <person name="Kamata A."/>
            <person name="Sekido S."/>
            <person name="Kobayashi Y."/>
            <person name="Hashimoto A."/>
            <person name="Hamamoto M."/>
            <person name="Hiraoka Y."/>
            <person name="Horinouchi S."/>
            <person name="Yoshida M."/>
        </authorList>
    </citation>
    <scope>SUBCELLULAR LOCATION [LARGE SCALE ANALYSIS]</scope>
</reference>
<reference key="4">
    <citation type="journal article" date="2008" name="J. Proteome Res.">
        <title>Phosphoproteome analysis of fission yeast.</title>
        <authorList>
            <person name="Wilson-Grady J.T."/>
            <person name="Villen J."/>
            <person name="Gygi S.P."/>
        </authorList>
    </citation>
    <scope>PHOSPHORYLATION [LARGE SCALE ANALYSIS] AT SER-174; SER-306 AND THR-513</scope>
    <scope>IDENTIFICATION BY MASS SPECTROMETRY</scope>
</reference>
<protein>
    <recommendedName>
        <fullName>Nucleolar protein dnt1</fullName>
    </recommendedName>
</protein>
<gene>
    <name type="primary">dnt1</name>
    <name type="ORF">SPBC25D12.02c</name>
</gene>
<comment type="function">
    <text evidence="2">Negatively regulates the septation initiation network (SIN) pathway, independently of the cdc14 phosphatase clp1. May also have a role in silencing rDNA transcription. Required for maintaining the exclusive nucleolus localization of nuc1.</text>
</comment>
<comment type="subcellular location">
    <subcellularLocation>
        <location>Cytoplasm</location>
    </subcellularLocation>
    <subcellularLocation>
        <location>Nucleus</location>
        <location>Nucleolus</location>
    </subcellularLocation>
    <subcellularLocation>
        <location>Cytoplasm</location>
        <location>Cytoskeleton</location>
        <location>Spindle</location>
    </subcellularLocation>
    <text>In late anaphase, localizes to the ends of the mitotic spindle.</text>
</comment>
<comment type="PTM">
    <text evidence="2 3">Phosphorylated by clp1.</text>
</comment>